<reference key="1">
    <citation type="submission" date="2008-04" db="EMBL/GenBank/DDBJ databases">
        <title>Complete sequence of Yersinia pseudotuberculosis PB1/+.</title>
        <authorList>
            <person name="Copeland A."/>
            <person name="Lucas S."/>
            <person name="Lapidus A."/>
            <person name="Glavina del Rio T."/>
            <person name="Dalin E."/>
            <person name="Tice H."/>
            <person name="Bruce D."/>
            <person name="Goodwin L."/>
            <person name="Pitluck S."/>
            <person name="Munk A.C."/>
            <person name="Brettin T."/>
            <person name="Detter J.C."/>
            <person name="Han C."/>
            <person name="Tapia R."/>
            <person name="Schmutz J."/>
            <person name="Larimer F."/>
            <person name="Land M."/>
            <person name="Hauser L."/>
            <person name="Challacombe J.F."/>
            <person name="Green L."/>
            <person name="Lindler L.E."/>
            <person name="Nikolich M.P."/>
            <person name="Richardson P."/>
        </authorList>
    </citation>
    <scope>NUCLEOTIDE SEQUENCE [LARGE SCALE GENOMIC DNA]</scope>
    <source>
        <strain>PB1/+</strain>
    </source>
</reference>
<sequence length="150" mass="15861">MQVILLDKVANLGSLGDQVNVKAGYARNFLVPQGKAVPATKKNVEFFEARRAELEAKLADVLAAAEARATKINELVSVTISSKAGDEGKLFGSIGTRDIADAVTAAGVEVAKSEVRLPNGVLRTAGEHEVHFQVHSDVFAKLNVVVVPEA</sequence>
<keyword id="KW-0687">Ribonucleoprotein</keyword>
<keyword id="KW-0689">Ribosomal protein</keyword>
<keyword id="KW-0694">RNA-binding</keyword>
<keyword id="KW-0699">rRNA-binding</keyword>
<evidence type="ECO:0000255" key="1">
    <source>
        <dbReference type="HAMAP-Rule" id="MF_00503"/>
    </source>
</evidence>
<evidence type="ECO:0000305" key="2"/>
<protein>
    <recommendedName>
        <fullName evidence="1">Large ribosomal subunit protein bL9</fullName>
    </recommendedName>
    <alternativeName>
        <fullName evidence="2">50S ribosomal protein L9</fullName>
    </alternativeName>
</protein>
<accession>B2K2L6</accession>
<proteinExistence type="inferred from homology"/>
<name>RL9_YERPB</name>
<organism>
    <name type="scientific">Yersinia pseudotuberculosis serotype IB (strain PB1/+)</name>
    <dbReference type="NCBI Taxonomy" id="502801"/>
    <lineage>
        <taxon>Bacteria</taxon>
        <taxon>Pseudomonadati</taxon>
        <taxon>Pseudomonadota</taxon>
        <taxon>Gammaproteobacteria</taxon>
        <taxon>Enterobacterales</taxon>
        <taxon>Yersiniaceae</taxon>
        <taxon>Yersinia</taxon>
    </lineage>
</organism>
<feature type="chain" id="PRO_1000126999" description="Large ribosomal subunit protein bL9">
    <location>
        <begin position="1"/>
        <end position="150"/>
    </location>
</feature>
<dbReference type="EMBL" id="CP001048">
    <property type="protein sequence ID" value="ACC87457.1"/>
    <property type="molecule type" value="Genomic_DNA"/>
</dbReference>
<dbReference type="RefSeq" id="WP_002210156.1">
    <property type="nucleotide sequence ID" value="NZ_CP009780.1"/>
</dbReference>
<dbReference type="SMR" id="B2K2L6"/>
<dbReference type="GeneID" id="57975178"/>
<dbReference type="KEGG" id="ypb:YPTS_0471"/>
<dbReference type="PATRIC" id="fig|502801.10.peg.4144"/>
<dbReference type="GO" id="GO:1990904">
    <property type="term" value="C:ribonucleoprotein complex"/>
    <property type="evidence" value="ECO:0007669"/>
    <property type="project" value="UniProtKB-KW"/>
</dbReference>
<dbReference type="GO" id="GO:0005840">
    <property type="term" value="C:ribosome"/>
    <property type="evidence" value="ECO:0007669"/>
    <property type="project" value="UniProtKB-KW"/>
</dbReference>
<dbReference type="GO" id="GO:0019843">
    <property type="term" value="F:rRNA binding"/>
    <property type="evidence" value="ECO:0007669"/>
    <property type="project" value="UniProtKB-UniRule"/>
</dbReference>
<dbReference type="GO" id="GO:0003735">
    <property type="term" value="F:structural constituent of ribosome"/>
    <property type="evidence" value="ECO:0007669"/>
    <property type="project" value="InterPro"/>
</dbReference>
<dbReference type="GO" id="GO:0006412">
    <property type="term" value="P:translation"/>
    <property type="evidence" value="ECO:0007669"/>
    <property type="project" value="UniProtKB-UniRule"/>
</dbReference>
<dbReference type="FunFam" id="3.10.430.100:FF:000001">
    <property type="entry name" value="50S ribosomal protein L9"/>
    <property type="match status" value="1"/>
</dbReference>
<dbReference type="FunFam" id="3.40.5.10:FF:000001">
    <property type="entry name" value="50S ribosomal protein L9"/>
    <property type="match status" value="1"/>
</dbReference>
<dbReference type="Gene3D" id="3.10.430.100">
    <property type="entry name" value="Ribosomal protein L9, C-terminal domain"/>
    <property type="match status" value="1"/>
</dbReference>
<dbReference type="Gene3D" id="3.40.5.10">
    <property type="entry name" value="Ribosomal protein L9, N-terminal domain"/>
    <property type="match status" value="1"/>
</dbReference>
<dbReference type="HAMAP" id="MF_00503">
    <property type="entry name" value="Ribosomal_bL9"/>
    <property type="match status" value="1"/>
</dbReference>
<dbReference type="InterPro" id="IPR000244">
    <property type="entry name" value="Ribosomal_bL9"/>
</dbReference>
<dbReference type="InterPro" id="IPR009027">
    <property type="entry name" value="Ribosomal_bL9/RNase_H1_N"/>
</dbReference>
<dbReference type="InterPro" id="IPR020594">
    <property type="entry name" value="Ribosomal_bL9_bac/chp"/>
</dbReference>
<dbReference type="InterPro" id="IPR020069">
    <property type="entry name" value="Ribosomal_bL9_C"/>
</dbReference>
<dbReference type="InterPro" id="IPR036791">
    <property type="entry name" value="Ribosomal_bL9_C_sf"/>
</dbReference>
<dbReference type="InterPro" id="IPR020070">
    <property type="entry name" value="Ribosomal_bL9_N"/>
</dbReference>
<dbReference type="InterPro" id="IPR036935">
    <property type="entry name" value="Ribosomal_bL9_N_sf"/>
</dbReference>
<dbReference type="NCBIfam" id="TIGR00158">
    <property type="entry name" value="L9"/>
    <property type="match status" value="1"/>
</dbReference>
<dbReference type="PANTHER" id="PTHR21368">
    <property type="entry name" value="50S RIBOSOMAL PROTEIN L9"/>
    <property type="match status" value="1"/>
</dbReference>
<dbReference type="Pfam" id="PF03948">
    <property type="entry name" value="Ribosomal_L9_C"/>
    <property type="match status" value="1"/>
</dbReference>
<dbReference type="Pfam" id="PF01281">
    <property type="entry name" value="Ribosomal_L9_N"/>
    <property type="match status" value="1"/>
</dbReference>
<dbReference type="SUPFAM" id="SSF55658">
    <property type="entry name" value="L9 N-domain-like"/>
    <property type="match status" value="1"/>
</dbReference>
<dbReference type="SUPFAM" id="SSF55653">
    <property type="entry name" value="Ribosomal protein L9 C-domain"/>
    <property type="match status" value="1"/>
</dbReference>
<dbReference type="PROSITE" id="PS00651">
    <property type="entry name" value="RIBOSOMAL_L9"/>
    <property type="match status" value="1"/>
</dbReference>
<comment type="function">
    <text evidence="1">Binds to the 23S rRNA.</text>
</comment>
<comment type="similarity">
    <text evidence="1">Belongs to the bacterial ribosomal protein bL9 family.</text>
</comment>
<gene>
    <name evidence="1" type="primary">rplI</name>
    <name type="ordered locus">YPTS_0471</name>
</gene>